<dbReference type="EMBL" id="CP001138">
    <property type="protein sequence ID" value="ACH49620.1"/>
    <property type="molecule type" value="Genomic_DNA"/>
</dbReference>
<dbReference type="SMR" id="B5EXL0"/>
<dbReference type="KEGG" id="sea:SeAg_B0511"/>
<dbReference type="HOGENOM" id="CLU_135723_3_1_6"/>
<dbReference type="Proteomes" id="UP000008819">
    <property type="component" value="Chromosome"/>
</dbReference>
<dbReference type="GO" id="GO:1990904">
    <property type="term" value="C:ribonucleoprotein complex"/>
    <property type="evidence" value="ECO:0007669"/>
    <property type="project" value="UniProtKB-KW"/>
</dbReference>
<dbReference type="GO" id="GO:0005840">
    <property type="term" value="C:ribosome"/>
    <property type="evidence" value="ECO:0007669"/>
    <property type="project" value="UniProtKB-KW"/>
</dbReference>
<dbReference type="GO" id="GO:0003735">
    <property type="term" value="F:structural constituent of ribosome"/>
    <property type="evidence" value="ECO:0007669"/>
    <property type="project" value="InterPro"/>
</dbReference>
<dbReference type="GO" id="GO:0006412">
    <property type="term" value="P:translation"/>
    <property type="evidence" value="ECO:0007669"/>
    <property type="project" value="UniProtKB-UniRule"/>
</dbReference>
<dbReference type="HAMAP" id="MF_00251">
    <property type="entry name" value="Ribosomal_bL36"/>
    <property type="match status" value="1"/>
</dbReference>
<dbReference type="InterPro" id="IPR000473">
    <property type="entry name" value="Ribosomal_bL36"/>
</dbReference>
<dbReference type="InterPro" id="IPR035977">
    <property type="entry name" value="Ribosomal_bL36_sp"/>
</dbReference>
<dbReference type="InterPro" id="IPR047621">
    <property type="entry name" value="Ribosomal_L36_bact"/>
</dbReference>
<dbReference type="NCBIfam" id="NF002021">
    <property type="entry name" value="PRK00831.1"/>
    <property type="match status" value="1"/>
</dbReference>
<dbReference type="NCBIfam" id="TIGR01022">
    <property type="entry name" value="rpmJ_bact"/>
    <property type="match status" value="1"/>
</dbReference>
<dbReference type="PANTHER" id="PTHR47781">
    <property type="entry name" value="50S RIBOSOMAL PROTEIN L36 2"/>
    <property type="match status" value="1"/>
</dbReference>
<dbReference type="PANTHER" id="PTHR47781:SF1">
    <property type="entry name" value="LARGE RIBOSOMAL SUBUNIT PROTEIN BL36B"/>
    <property type="match status" value="1"/>
</dbReference>
<dbReference type="Pfam" id="PF00444">
    <property type="entry name" value="Ribosomal_L36"/>
    <property type="match status" value="1"/>
</dbReference>
<dbReference type="SUPFAM" id="SSF57840">
    <property type="entry name" value="Ribosomal protein L36"/>
    <property type="match status" value="1"/>
</dbReference>
<dbReference type="PROSITE" id="PS00828">
    <property type="entry name" value="RIBOSOMAL_L36"/>
    <property type="match status" value="1"/>
</dbReference>
<feature type="chain" id="PRO_1000101065" description="Large ribosomal subunit protein bL36">
    <location>
        <begin position="1"/>
        <end position="46"/>
    </location>
</feature>
<name>RL36_SALA4</name>
<accession>B5EXL0</accession>
<organism>
    <name type="scientific">Salmonella agona (strain SL483)</name>
    <dbReference type="NCBI Taxonomy" id="454166"/>
    <lineage>
        <taxon>Bacteria</taxon>
        <taxon>Pseudomonadati</taxon>
        <taxon>Pseudomonadota</taxon>
        <taxon>Gammaproteobacteria</taxon>
        <taxon>Enterobacterales</taxon>
        <taxon>Enterobacteriaceae</taxon>
        <taxon>Salmonella</taxon>
    </lineage>
</organism>
<comment type="similarity">
    <text evidence="1">Belongs to the bacterial ribosomal protein bL36 family.</text>
</comment>
<proteinExistence type="inferred from homology"/>
<sequence>MQVLNSLRNAKQRHPDCQIVKRKGRLYVICKTNPRFKAVQGRKKRR</sequence>
<evidence type="ECO:0000255" key="1">
    <source>
        <dbReference type="HAMAP-Rule" id="MF_00251"/>
    </source>
</evidence>
<evidence type="ECO:0000305" key="2"/>
<protein>
    <recommendedName>
        <fullName evidence="1">Large ribosomal subunit protein bL36</fullName>
    </recommendedName>
    <alternativeName>
        <fullName evidence="2">50S ribosomal protein L36</fullName>
    </alternativeName>
</protein>
<gene>
    <name evidence="1" type="primary">rpmJ</name>
    <name type="ordered locus">SeAg_B0511</name>
</gene>
<reference key="1">
    <citation type="journal article" date="2011" name="J. Bacteriol.">
        <title>Comparative genomics of 28 Salmonella enterica isolates: evidence for CRISPR-mediated adaptive sublineage evolution.</title>
        <authorList>
            <person name="Fricke W.F."/>
            <person name="Mammel M.K."/>
            <person name="McDermott P.F."/>
            <person name="Tartera C."/>
            <person name="White D.G."/>
            <person name="Leclerc J.E."/>
            <person name="Ravel J."/>
            <person name="Cebula T.A."/>
        </authorList>
    </citation>
    <scope>NUCLEOTIDE SEQUENCE [LARGE SCALE GENOMIC DNA]</scope>
    <source>
        <strain>SL483</strain>
    </source>
</reference>
<keyword id="KW-0687">Ribonucleoprotein</keyword>
<keyword id="KW-0689">Ribosomal protein</keyword>